<organism>
    <name type="scientific">Candida albicans (strain SC5314 / ATCC MYA-2876)</name>
    <name type="common">Yeast</name>
    <dbReference type="NCBI Taxonomy" id="237561"/>
    <lineage>
        <taxon>Eukaryota</taxon>
        <taxon>Fungi</taxon>
        <taxon>Dikarya</taxon>
        <taxon>Ascomycota</taxon>
        <taxon>Saccharomycotina</taxon>
        <taxon>Pichiomycetes</taxon>
        <taxon>Debaryomycetaceae</taxon>
        <taxon>Candida/Lodderomyces clade</taxon>
        <taxon>Candida</taxon>
    </lineage>
</organism>
<gene>
    <name type="primary">HEM1</name>
    <name type="ordered locus">CAALFM_CR02000CA</name>
    <name type="ORF">Ca49C4.15</name>
    <name type="ORF">CaO19.2601</name>
</gene>
<reference key="1">
    <citation type="submission" date="1998-11" db="EMBL/GenBank/DDBJ databases">
        <title>Candida albicans strain 1161 genome pilot sequencing project.</title>
        <authorList>
            <person name="Murphy L."/>
            <person name="Harris D."/>
            <person name="Barrell B.G."/>
            <person name="Rajandream M.A."/>
        </authorList>
    </citation>
    <scope>NUCLEOTIDE SEQUENCE [LARGE SCALE GENOMIC DNA]</scope>
    <source>
        <strain>1161</strain>
    </source>
</reference>
<reference key="2">
    <citation type="journal article" date="2004" name="Proc. Natl. Acad. Sci. U.S.A.">
        <title>The diploid genome sequence of Candida albicans.</title>
        <authorList>
            <person name="Jones T."/>
            <person name="Federspiel N.A."/>
            <person name="Chibana H."/>
            <person name="Dungan J."/>
            <person name="Kalman S."/>
            <person name="Magee B.B."/>
            <person name="Newport G."/>
            <person name="Thorstenson Y.R."/>
            <person name="Agabian N."/>
            <person name="Magee P.T."/>
            <person name="Davis R.W."/>
            <person name="Scherer S."/>
        </authorList>
    </citation>
    <scope>NUCLEOTIDE SEQUENCE [LARGE SCALE GENOMIC DNA]</scope>
    <source>
        <strain>SC5314 / ATCC MYA-2876</strain>
    </source>
</reference>
<reference key="3">
    <citation type="journal article" date="2007" name="Genome Biol.">
        <title>Assembly of the Candida albicans genome into sixteen supercontigs aligned on the eight chromosomes.</title>
        <authorList>
            <person name="van het Hoog M."/>
            <person name="Rast T.J."/>
            <person name="Martchenko M."/>
            <person name="Grindle S."/>
            <person name="Dignard D."/>
            <person name="Hogues H."/>
            <person name="Cuomo C."/>
            <person name="Berriman M."/>
            <person name="Scherer S."/>
            <person name="Magee B.B."/>
            <person name="Whiteway M."/>
            <person name="Chibana H."/>
            <person name="Nantel A."/>
            <person name="Magee P.T."/>
        </authorList>
    </citation>
    <scope>GENOME REANNOTATION</scope>
    <source>
        <strain>SC5314 / ATCC MYA-2876</strain>
    </source>
</reference>
<reference key="4">
    <citation type="journal article" date="2013" name="Genome Biol.">
        <title>Assembly of a phased diploid Candida albicans genome facilitates allele-specific measurements and provides a simple model for repeat and indel structure.</title>
        <authorList>
            <person name="Muzzey D."/>
            <person name="Schwartz K."/>
            <person name="Weissman J.S."/>
            <person name="Sherlock G."/>
        </authorList>
    </citation>
    <scope>NUCLEOTIDE SEQUENCE [LARGE SCALE GENOMIC DNA]</scope>
    <scope>GENOME REANNOTATION</scope>
    <source>
        <strain>SC5314 / ATCC MYA-2876</strain>
    </source>
</reference>
<name>HEM1_CANAL</name>
<feature type="transit peptide" description="Mitochondrion" evidence="3">
    <location>
        <begin position="1"/>
        <end position="57"/>
    </location>
</feature>
<feature type="chain" id="PRO_0000001237" description="5-aminolevulinate synthase, mitochondrial">
    <location>
        <begin position="58"/>
        <end position="564"/>
    </location>
</feature>
<feature type="active site" evidence="2">
    <location>
        <position position="353"/>
    </location>
</feature>
<feature type="binding site" evidence="2">
    <location>
        <position position="113"/>
    </location>
    <ligand>
        <name>substrate</name>
    </ligand>
</feature>
<feature type="binding site" evidence="2">
    <location>
        <position position="226"/>
    </location>
    <ligand>
        <name>substrate</name>
    </ligand>
</feature>
<feature type="binding site" evidence="2">
    <location>
        <position position="245"/>
    </location>
    <ligand>
        <name>substrate</name>
    </ligand>
</feature>
<feature type="binding site" description="in other chain" evidence="2">
    <location>
        <position position="278"/>
    </location>
    <ligand>
        <name>pyridoxal 5'-phosphate</name>
        <dbReference type="ChEBI" id="CHEBI:597326"/>
        <note>ligand shared between dimeric partners</note>
    </ligand>
</feature>
<feature type="binding site" description="in other chain" evidence="2">
    <location>
        <position position="306"/>
    </location>
    <ligand>
        <name>pyridoxal 5'-phosphate</name>
        <dbReference type="ChEBI" id="CHEBI:597326"/>
        <note>ligand shared between dimeric partners</note>
    </ligand>
</feature>
<feature type="binding site" description="in other chain" evidence="2">
    <location>
        <position position="350"/>
    </location>
    <ligand>
        <name>pyridoxal 5'-phosphate</name>
        <dbReference type="ChEBI" id="CHEBI:597326"/>
        <note>ligand shared between dimeric partners</note>
    </ligand>
</feature>
<feature type="binding site" evidence="2">
    <location>
        <position position="382"/>
    </location>
    <ligand>
        <name>pyridoxal 5'-phosphate</name>
        <dbReference type="ChEBI" id="CHEBI:597326"/>
        <note>ligand shared between dimeric partners</note>
    </ligand>
</feature>
<feature type="binding site" evidence="2">
    <location>
        <position position="383"/>
    </location>
    <ligand>
        <name>pyridoxal 5'-phosphate</name>
        <dbReference type="ChEBI" id="CHEBI:597326"/>
        <note>ligand shared between dimeric partners</note>
    </ligand>
</feature>
<feature type="binding site" evidence="2">
    <location>
        <position position="468"/>
    </location>
    <ligand>
        <name>substrate</name>
    </ligand>
</feature>
<feature type="modified residue" description="N6-(pyridoxal phosphate)lysine" evidence="2">
    <location>
        <position position="353"/>
    </location>
</feature>
<feature type="sequence conflict" description="In Ref. 1; CAA22025." ref="1">
    <original>A</original>
    <variation>V</variation>
    <location>
        <position position="64"/>
    </location>
</feature>
<feature type="sequence conflict" description="In Ref. 1; CAA22025." ref="1">
    <original>T</original>
    <variation>S</variation>
    <location>
        <position position="81"/>
    </location>
</feature>
<comment type="function">
    <text evidence="1">Catalyzes the synthesis of 5-aminolevulinate (ALA) from succinyl-CoA and glycine, the first and rate-limiting step in heme biosynthesis.</text>
</comment>
<comment type="catalytic activity">
    <reaction evidence="1">
        <text>succinyl-CoA + glycine + H(+) = 5-aminolevulinate + CO2 + CoA</text>
        <dbReference type="Rhea" id="RHEA:12921"/>
        <dbReference type="ChEBI" id="CHEBI:15378"/>
        <dbReference type="ChEBI" id="CHEBI:16526"/>
        <dbReference type="ChEBI" id="CHEBI:57287"/>
        <dbReference type="ChEBI" id="CHEBI:57292"/>
        <dbReference type="ChEBI" id="CHEBI:57305"/>
        <dbReference type="ChEBI" id="CHEBI:356416"/>
        <dbReference type="EC" id="2.3.1.37"/>
    </reaction>
</comment>
<comment type="cofactor">
    <cofactor evidence="1">
        <name>pyridoxal 5'-phosphate</name>
        <dbReference type="ChEBI" id="CHEBI:597326"/>
    </cofactor>
</comment>
<comment type="pathway">
    <text evidence="1">Porphyrin-containing compound metabolism; protoporphyrin-IX biosynthesis; 5-aminolevulinate from glycine: step 1/1.</text>
</comment>
<comment type="subunit">
    <text evidence="1">Homodimer.</text>
</comment>
<comment type="subcellular location">
    <subcellularLocation>
        <location evidence="1">Mitochondrion matrix</location>
    </subcellularLocation>
</comment>
<comment type="similarity">
    <text evidence="4">Belongs to the class-II pyridoxal-phosphate-dependent aminotransferase family.</text>
</comment>
<dbReference type="EC" id="2.3.1.37"/>
<dbReference type="EMBL" id="AL033503">
    <property type="protein sequence ID" value="CAA22025.1"/>
    <property type="molecule type" value="Genomic_DNA"/>
</dbReference>
<dbReference type="EMBL" id="CP017630">
    <property type="protein sequence ID" value="AOW30952.1"/>
    <property type="molecule type" value="Genomic_DNA"/>
</dbReference>
<dbReference type="PIR" id="T18251">
    <property type="entry name" value="T18251"/>
</dbReference>
<dbReference type="RefSeq" id="XP_718266.2">
    <property type="nucleotide sequence ID" value="XM_713173.2"/>
</dbReference>
<dbReference type="SMR" id="O94069"/>
<dbReference type="FunCoup" id="O94069">
    <property type="interactions" value="504"/>
</dbReference>
<dbReference type="STRING" id="237561.O94069"/>
<dbReference type="EnsemblFungi" id="CR_02000C_A-T">
    <property type="protein sequence ID" value="CR_02000C_A-T-p1"/>
    <property type="gene ID" value="CR_02000C_A"/>
</dbReference>
<dbReference type="GeneID" id="3640149"/>
<dbReference type="KEGG" id="cal:CAALFM_CR02000CA"/>
<dbReference type="CGD" id="CAL0000189686">
    <property type="gene designation" value="HEM1"/>
</dbReference>
<dbReference type="VEuPathDB" id="FungiDB:CR_02000C_A"/>
<dbReference type="eggNOG" id="KOG1360">
    <property type="taxonomic scope" value="Eukaryota"/>
</dbReference>
<dbReference type="HOGENOM" id="CLU_015846_6_0_1"/>
<dbReference type="InParanoid" id="O94069"/>
<dbReference type="OMA" id="ARRCPIM"/>
<dbReference type="OrthoDB" id="10263824at2759"/>
<dbReference type="UniPathway" id="UPA00251">
    <property type="reaction ID" value="UER00375"/>
</dbReference>
<dbReference type="Proteomes" id="UP000000559">
    <property type="component" value="Chromosome R"/>
</dbReference>
<dbReference type="GO" id="GO:0005759">
    <property type="term" value="C:mitochondrial matrix"/>
    <property type="evidence" value="ECO:0007669"/>
    <property type="project" value="UniProtKB-SubCell"/>
</dbReference>
<dbReference type="GO" id="GO:0005739">
    <property type="term" value="C:mitochondrion"/>
    <property type="evidence" value="ECO:0000318"/>
    <property type="project" value="GO_Central"/>
</dbReference>
<dbReference type="GO" id="GO:0003870">
    <property type="term" value="F:5-aminolevulinate synthase activity"/>
    <property type="evidence" value="ECO:0000315"/>
    <property type="project" value="CGD"/>
</dbReference>
<dbReference type="GO" id="GO:0030170">
    <property type="term" value="F:pyridoxal phosphate binding"/>
    <property type="evidence" value="ECO:0007669"/>
    <property type="project" value="InterPro"/>
</dbReference>
<dbReference type="GO" id="GO:0006783">
    <property type="term" value="P:heme biosynthetic process"/>
    <property type="evidence" value="ECO:0000315"/>
    <property type="project" value="CGD"/>
</dbReference>
<dbReference type="GO" id="GO:1902117">
    <property type="term" value="P:positive regulation of organelle assembly"/>
    <property type="evidence" value="ECO:0007669"/>
    <property type="project" value="EnsemblFungi"/>
</dbReference>
<dbReference type="GO" id="GO:0006782">
    <property type="term" value="P:protoporphyrinogen IX biosynthetic process"/>
    <property type="evidence" value="ECO:0007669"/>
    <property type="project" value="UniProtKB-UniPathway"/>
</dbReference>
<dbReference type="CDD" id="cd06454">
    <property type="entry name" value="KBL_like"/>
    <property type="match status" value="1"/>
</dbReference>
<dbReference type="FunFam" id="3.40.640.10:FF:000006">
    <property type="entry name" value="5-aminolevulinate synthase, mitochondrial"/>
    <property type="match status" value="1"/>
</dbReference>
<dbReference type="Gene3D" id="3.90.1150.10">
    <property type="entry name" value="Aspartate Aminotransferase, domain 1"/>
    <property type="match status" value="1"/>
</dbReference>
<dbReference type="Gene3D" id="3.40.640.10">
    <property type="entry name" value="Type I PLP-dependent aspartate aminotransferase-like (Major domain)"/>
    <property type="match status" value="1"/>
</dbReference>
<dbReference type="InterPro" id="IPR010961">
    <property type="entry name" value="4pyrrol_synth_NH2levulA_synth"/>
</dbReference>
<dbReference type="InterPro" id="IPR001917">
    <property type="entry name" value="Aminotrans_II_pyridoxalP_BS"/>
</dbReference>
<dbReference type="InterPro" id="IPR004839">
    <property type="entry name" value="Aminotransferase_I/II_large"/>
</dbReference>
<dbReference type="InterPro" id="IPR050087">
    <property type="entry name" value="AON_synthase_class-II"/>
</dbReference>
<dbReference type="InterPro" id="IPR015424">
    <property type="entry name" value="PyrdxlP-dep_Trfase"/>
</dbReference>
<dbReference type="InterPro" id="IPR015421">
    <property type="entry name" value="PyrdxlP-dep_Trfase_major"/>
</dbReference>
<dbReference type="InterPro" id="IPR015422">
    <property type="entry name" value="PyrdxlP-dep_Trfase_small"/>
</dbReference>
<dbReference type="NCBIfam" id="TIGR01821">
    <property type="entry name" value="5aminolev_synth"/>
    <property type="match status" value="1"/>
</dbReference>
<dbReference type="PANTHER" id="PTHR13693:SF102">
    <property type="entry name" value="2-AMINO-3-KETOBUTYRATE COENZYME A LIGASE, MITOCHONDRIAL"/>
    <property type="match status" value="1"/>
</dbReference>
<dbReference type="PANTHER" id="PTHR13693">
    <property type="entry name" value="CLASS II AMINOTRANSFERASE/8-AMINO-7-OXONONANOATE SYNTHASE"/>
    <property type="match status" value="1"/>
</dbReference>
<dbReference type="Pfam" id="PF00155">
    <property type="entry name" value="Aminotran_1_2"/>
    <property type="match status" value="1"/>
</dbReference>
<dbReference type="SUPFAM" id="SSF53383">
    <property type="entry name" value="PLP-dependent transferases"/>
    <property type="match status" value="1"/>
</dbReference>
<dbReference type="PROSITE" id="PS00599">
    <property type="entry name" value="AA_TRANSFER_CLASS_2"/>
    <property type="match status" value="1"/>
</dbReference>
<evidence type="ECO:0000250" key="1">
    <source>
        <dbReference type="UniProtKB" id="P09950"/>
    </source>
</evidence>
<evidence type="ECO:0000250" key="2">
    <source>
        <dbReference type="UniProtKB" id="P18079"/>
    </source>
</evidence>
<evidence type="ECO:0000255" key="3"/>
<evidence type="ECO:0000305" key="4"/>
<sequence>MESITKVSMSVCPFVRSTSTQALRQLSQTSGALANQARQCPIAGNAIRAKEISIRSYSSATKPARATAATPSTPEATFNVTSSFELGSKETAFDYNGYLGNELEKKRSDKSYRYFNNINRLANEFPKAHRTQEEDKVTVWCSNDYLGMGKNENTLKEMKRVLDKYGSGAGGTRNIAGHNSHAIKLESELAALHKHDAALVFSSCFVANDAVLSLLGQKIKDLVIFSDELNHASMIQGIRNSRARKHIFKHNNLADLESKLAQYPKSTPKLIAFESVYSMCGSIAPIEAICDLAEKYGALTFLDEVHAVGMYGPHGAGVAEHLNFEAHLKSGIERPEITTVMSRVDMVTGTLGKAYGVVGGYITGKTNLIDWFRSYAPGFIFTTSLPPAIMAGCSASIRYQRATLKDRIAQQKNTRLVKNNLNELGIPVIPNPSHIVPVLVGNAADAKRASDLLLNKHDIYVQAINFPTVPIGEERLRITPTPGHGPELSKQLVEAVDSVFTELNLNRINDWKKLGGLVGVGVEGAAKVEHIWTEEQLALTDADLNPNVVNPAISPLDVSSGIST</sequence>
<accession>O94069</accession>
<accession>A0A1D8PS41</accession>
<accession>Q5A965</accession>
<keyword id="KW-0012">Acyltransferase</keyword>
<keyword id="KW-0350">Heme biosynthesis</keyword>
<keyword id="KW-0496">Mitochondrion</keyword>
<keyword id="KW-0663">Pyridoxal phosphate</keyword>
<keyword id="KW-1185">Reference proteome</keyword>
<keyword id="KW-0808">Transferase</keyword>
<keyword id="KW-0809">Transit peptide</keyword>
<protein>
    <recommendedName>
        <fullName>5-aminolevulinate synthase, mitochondrial</fullName>
        <ecNumber>2.3.1.37</ecNumber>
    </recommendedName>
    <alternativeName>
        <fullName>5-aminolevulinic acid synthase</fullName>
    </alternativeName>
    <alternativeName>
        <fullName>Delta-ALA synthase</fullName>
    </alternativeName>
    <alternativeName>
        <fullName>Delta-aminolevulinate synthase</fullName>
    </alternativeName>
</protein>
<proteinExistence type="inferred from homology"/>